<feature type="signal peptide" evidence="2">
    <location>
        <begin position="1"/>
        <end position="22"/>
    </location>
</feature>
<feature type="chain" id="PRO_5013986264" description="Class I hydrophobin 2">
    <location>
        <begin position="23"/>
        <end position="122"/>
    </location>
</feature>
<feature type="disulfide bond" evidence="1">
    <location>
        <begin position="40"/>
        <end position="101"/>
    </location>
</feature>
<feature type="disulfide bond" evidence="1">
    <location>
        <begin position="47"/>
        <end position="95"/>
    </location>
</feature>
<feature type="disulfide bond" evidence="1">
    <location>
        <begin position="48"/>
        <end position="81"/>
    </location>
</feature>
<feature type="disulfide bond" evidence="1">
    <location>
        <begin position="102"/>
        <end position="115"/>
    </location>
</feature>
<organism>
    <name type="scientific">Heterobasidion annosum</name>
    <name type="common">Root rot fungus</name>
    <name type="synonym">Polyporus annosus</name>
    <dbReference type="NCBI Taxonomy" id="13563"/>
    <lineage>
        <taxon>Eukaryota</taxon>
        <taxon>Fungi</taxon>
        <taxon>Dikarya</taxon>
        <taxon>Basidiomycota</taxon>
        <taxon>Agaricomycotina</taxon>
        <taxon>Agaricomycetes</taxon>
        <taxon>Russulales</taxon>
        <taxon>Bondarzewiaceae</taxon>
        <taxon>Heterobasidion</taxon>
        <taxon>Heterobasidion annosum species complex</taxon>
    </lineage>
</organism>
<dbReference type="EMBL" id="DQ198364">
    <property type="protein sequence ID" value="ABA46362.1"/>
    <property type="molecule type" value="Genomic_DNA"/>
</dbReference>
<dbReference type="OMA" id="PITCCED"/>
<dbReference type="GO" id="GO:0005576">
    <property type="term" value="C:extracellular region"/>
    <property type="evidence" value="ECO:0007669"/>
    <property type="project" value="UniProtKB-KW"/>
</dbReference>
<dbReference type="GO" id="GO:0009277">
    <property type="term" value="C:fungal-type cell wall"/>
    <property type="evidence" value="ECO:0007669"/>
    <property type="project" value="InterPro"/>
</dbReference>
<dbReference type="GO" id="GO:0005199">
    <property type="term" value="F:structural constituent of cell wall"/>
    <property type="evidence" value="ECO:0007669"/>
    <property type="project" value="InterPro"/>
</dbReference>
<dbReference type="CDD" id="cd23507">
    <property type="entry name" value="hydrophobin_I"/>
    <property type="match status" value="1"/>
</dbReference>
<dbReference type="InterPro" id="IPR001338">
    <property type="entry name" value="Hydrophobin"/>
</dbReference>
<dbReference type="Pfam" id="PF01185">
    <property type="entry name" value="Hydrophobin"/>
    <property type="match status" value="1"/>
</dbReference>
<dbReference type="SMART" id="SM00075">
    <property type="entry name" value="HYDRO"/>
    <property type="match status" value="1"/>
</dbReference>
<proteinExistence type="evidence at transcript level"/>
<sequence>MFARVSTLFAMFFLGLALMVSATPAALKPVARDTIPASQCNTGDLQCCNTVENADSPSAAALLGLLGVVVQGLDVLVGLTCTPITVIGVGSGANCVQQPVCCENNNFNGLINIGCTPVNLGL</sequence>
<protein>
    <recommendedName>
        <fullName evidence="4">Class I hydrophobin 2</fullName>
    </recommendedName>
</protein>
<evidence type="ECO:0000250" key="1">
    <source>
        <dbReference type="UniProtKB" id="Q04571"/>
    </source>
</evidence>
<evidence type="ECO:0000255" key="2"/>
<evidence type="ECO:0000269" key="3">
    <source>
    </source>
</evidence>
<evidence type="ECO:0000303" key="4">
    <source>
    </source>
</evidence>
<evidence type="ECO:0000305" key="5"/>
<evidence type="ECO:0000305" key="6">
    <source>
    </source>
</evidence>
<reference key="1">
    <citation type="journal article" date="2007" name="Mycologia">
        <title>Two hydrophobin genes from the conifer pathogen Heterobasidion annosum are expressed in aerial hyphae.</title>
        <authorList>
            <person name="Karlsson M."/>
            <person name="Stenlid J."/>
            <person name="Olson A."/>
        </authorList>
    </citation>
    <scope>NUCLEOTIDE SEQUENCE [GENOMIC DNA]</scope>
    <scope>FUNCTION</scope>
    <scope>INDUCTION</scope>
    <scope>DEVELOPMENTAL STAGE</scope>
</reference>
<comment type="function">
    <text evidence="3 5">Aerial growth, conidiation, and dispersal of filamentous fungi in the environment rely upon a capability of their secreting small amphipathic proteins called hydrophobins (HPBs) with low sequence identity. Class I can self-assemble into an outermost layer of rodlet bundles on aerial cell surfaces, conferring cellular hydrophobicity that supports fungal growth, development and dispersal; whereas Class II form highly ordered films at water-air interfaces through intermolecular interactions but contribute nothing to the rodlet structure (Probable). Hah2 is a class I hydrophobin that is involved in aerial growth of mycelia, but does not play a role in pathogenesis (PubMed:17682775).</text>
</comment>
<comment type="subunit">
    <text evidence="1">Self-assembles to form functional amyloid fibrils called rodlets. Self-assembly into fibrillar rodlets occurs spontaneously at hydrophobic:hydrophilic interfaces and the rodlets further associate laterally to form amphipathic monolayers.</text>
</comment>
<comment type="subcellular location">
    <subcellularLocation>
        <location evidence="6">Secreted</location>
    </subcellularLocation>
    <subcellularLocation>
        <location evidence="6">Secreted</location>
        <location evidence="6">Cell wall</location>
    </subcellularLocation>
</comment>
<comment type="developmental stage">
    <text evidence="3">Expression in high aerial hyphae but low in submerged hyphae.</text>
</comment>
<comment type="induction">
    <text evidence="3">Expression is low during in vitro infection of pine seedlings.</text>
</comment>
<comment type="similarity">
    <text evidence="5">Belongs to the fungal hydrophobin family.</text>
</comment>
<name>HAH2_HETAN</name>
<gene>
    <name evidence="4" type="primary">Hah2</name>
</gene>
<accession>Q3HS87</accession>
<keyword id="KW-0134">Cell wall</keyword>
<keyword id="KW-1015">Disulfide bond</keyword>
<keyword id="KW-0964">Secreted</keyword>
<keyword id="KW-0732">Signal</keyword>